<accession>Q6P2M8</accession>
<accession>B4DJR8</accession>
<accession>B4E1A6</accession>
<accession>B7WPG0</accession>
<accession>D3DWU7</accession>
<accession>Q8N4R0</accession>
<proteinExistence type="evidence at protein level"/>
<gene>
    <name type="primary">PNCK</name>
</gene>
<reference key="1">
    <citation type="journal article" date="2004" name="Nat. Genet.">
        <title>Complete sequencing and characterization of 21,243 full-length human cDNAs.</title>
        <authorList>
            <person name="Ota T."/>
            <person name="Suzuki Y."/>
            <person name="Nishikawa T."/>
            <person name="Otsuki T."/>
            <person name="Sugiyama T."/>
            <person name="Irie R."/>
            <person name="Wakamatsu A."/>
            <person name="Hayashi K."/>
            <person name="Sato H."/>
            <person name="Nagai K."/>
            <person name="Kimura K."/>
            <person name="Makita H."/>
            <person name="Sekine M."/>
            <person name="Obayashi M."/>
            <person name="Nishi T."/>
            <person name="Shibahara T."/>
            <person name="Tanaka T."/>
            <person name="Ishii S."/>
            <person name="Yamamoto J."/>
            <person name="Saito K."/>
            <person name="Kawai Y."/>
            <person name="Isono Y."/>
            <person name="Nakamura Y."/>
            <person name="Nagahari K."/>
            <person name="Murakami K."/>
            <person name="Yasuda T."/>
            <person name="Iwayanagi T."/>
            <person name="Wagatsuma M."/>
            <person name="Shiratori A."/>
            <person name="Sudo H."/>
            <person name="Hosoiri T."/>
            <person name="Kaku Y."/>
            <person name="Kodaira H."/>
            <person name="Kondo H."/>
            <person name="Sugawara M."/>
            <person name="Takahashi M."/>
            <person name="Kanda K."/>
            <person name="Yokoi T."/>
            <person name="Furuya T."/>
            <person name="Kikkawa E."/>
            <person name="Omura Y."/>
            <person name="Abe K."/>
            <person name="Kamihara K."/>
            <person name="Katsuta N."/>
            <person name="Sato K."/>
            <person name="Tanikawa M."/>
            <person name="Yamazaki M."/>
            <person name="Ninomiya K."/>
            <person name="Ishibashi T."/>
            <person name="Yamashita H."/>
            <person name="Murakawa K."/>
            <person name="Fujimori K."/>
            <person name="Tanai H."/>
            <person name="Kimata M."/>
            <person name="Watanabe M."/>
            <person name="Hiraoka S."/>
            <person name="Chiba Y."/>
            <person name="Ishida S."/>
            <person name="Ono Y."/>
            <person name="Takiguchi S."/>
            <person name="Watanabe S."/>
            <person name="Yosida M."/>
            <person name="Hotuta T."/>
            <person name="Kusano J."/>
            <person name="Kanehori K."/>
            <person name="Takahashi-Fujii A."/>
            <person name="Hara H."/>
            <person name="Tanase T.-O."/>
            <person name="Nomura Y."/>
            <person name="Togiya S."/>
            <person name="Komai F."/>
            <person name="Hara R."/>
            <person name="Takeuchi K."/>
            <person name="Arita M."/>
            <person name="Imose N."/>
            <person name="Musashino K."/>
            <person name="Yuuki H."/>
            <person name="Oshima A."/>
            <person name="Sasaki N."/>
            <person name="Aotsuka S."/>
            <person name="Yoshikawa Y."/>
            <person name="Matsunawa H."/>
            <person name="Ichihara T."/>
            <person name="Shiohata N."/>
            <person name="Sano S."/>
            <person name="Moriya S."/>
            <person name="Momiyama H."/>
            <person name="Satoh N."/>
            <person name="Takami S."/>
            <person name="Terashima Y."/>
            <person name="Suzuki O."/>
            <person name="Nakagawa S."/>
            <person name="Senoh A."/>
            <person name="Mizoguchi H."/>
            <person name="Goto Y."/>
            <person name="Shimizu F."/>
            <person name="Wakebe H."/>
            <person name="Hishigaki H."/>
            <person name="Watanabe T."/>
            <person name="Sugiyama A."/>
            <person name="Takemoto M."/>
            <person name="Kawakami B."/>
            <person name="Yamazaki M."/>
            <person name="Watanabe K."/>
            <person name="Kumagai A."/>
            <person name="Itakura S."/>
            <person name="Fukuzumi Y."/>
            <person name="Fujimori Y."/>
            <person name="Komiyama M."/>
            <person name="Tashiro H."/>
            <person name="Tanigami A."/>
            <person name="Fujiwara T."/>
            <person name="Ono T."/>
            <person name="Yamada K."/>
            <person name="Fujii Y."/>
            <person name="Ozaki K."/>
            <person name="Hirao M."/>
            <person name="Ohmori Y."/>
            <person name="Kawabata A."/>
            <person name="Hikiji T."/>
            <person name="Kobatake N."/>
            <person name="Inagaki H."/>
            <person name="Ikema Y."/>
            <person name="Okamoto S."/>
            <person name="Okitani R."/>
            <person name="Kawakami T."/>
            <person name="Noguchi S."/>
            <person name="Itoh T."/>
            <person name="Shigeta K."/>
            <person name="Senba T."/>
            <person name="Matsumura K."/>
            <person name="Nakajima Y."/>
            <person name="Mizuno T."/>
            <person name="Morinaga M."/>
            <person name="Sasaki M."/>
            <person name="Togashi T."/>
            <person name="Oyama M."/>
            <person name="Hata H."/>
            <person name="Watanabe M."/>
            <person name="Komatsu T."/>
            <person name="Mizushima-Sugano J."/>
            <person name="Satoh T."/>
            <person name="Shirai Y."/>
            <person name="Takahashi Y."/>
            <person name="Nakagawa K."/>
            <person name="Okumura K."/>
            <person name="Nagase T."/>
            <person name="Nomura N."/>
            <person name="Kikuchi H."/>
            <person name="Masuho Y."/>
            <person name="Yamashita R."/>
            <person name="Nakai K."/>
            <person name="Yada T."/>
            <person name="Nakamura Y."/>
            <person name="Ohara O."/>
            <person name="Isogai T."/>
            <person name="Sugano S."/>
        </authorList>
    </citation>
    <scope>NUCLEOTIDE SEQUENCE [LARGE SCALE MRNA] (ISOFORMS 4 AND 5)</scope>
    <source>
        <tissue>Liver</tissue>
        <tissue>Thalamus</tissue>
    </source>
</reference>
<reference key="2">
    <citation type="submission" date="2004-07" db="EMBL/GenBank/DDBJ databases">
        <title>Full-length cDNA libraries and normalization.</title>
        <authorList>
            <person name="Li W.B."/>
            <person name="Gruber C."/>
            <person name="Jessee J."/>
            <person name="Polayes D."/>
        </authorList>
    </citation>
    <scope>NUCLEOTIDE SEQUENCE [LARGE SCALE MRNA] (ISOFORM 2)</scope>
    <source>
        <tissue>Placenta</tissue>
    </source>
</reference>
<reference key="3">
    <citation type="journal article" date="2005" name="Nature">
        <title>The DNA sequence of the human X chromosome.</title>
        <authorList>
            <person name="Ross M.T."/>
            <person name="Grafham D.V."/>
            <person name="Coffey A.J."/>
            <person name="Scherer S."/>
            <person name="McLay K."/>
            <person name="Muzny D."/>
            <person name="Platzer M."/>
            <person name="Howell G.R."/>
            <person name="Burrows C."/>
            <person name="Bird C.P."/>
            <person name="Frankish A."/>
            <person name="Lovell F.L."/>
            <person name="Howe K.L."/>
            <person name="Ashurst J.L."/>
            <person name="Fulton R.S."/>
            <person name="Sudbrak R."/>
            <person name="Wen G."/>
            <person name="Jones M.C."/>
            <person name="Hurles M.E."/>
            <person name="Andrews T.D."/>
            <person name="Scott C.E."/>
            <person name="Searle S."/>
            <person name="Ramser J."/>
            <person name="Whittaker A."/>
            <person name="Deadman R."/>
            <person name="Carter N.P."/>
            <person name="Hunt S.E."/>
            <person name="Chen R."/>
            <person name="Cree A."/>
            <person name="Gunaratne P."/>
            <person name="Havlak P."/>
            <person name="Hodgson A."/>
            <person name="Metzker M.L."/>
            <person name="Richards S."/>
            <person name="Scott G."/>
            <person name="Steffen D."/>
            <person name="Sodergren E."/>
            <person name="Wheeler D.A."/>
            <person name="Worley K.C."/>
            <person name="Ainscough R."/>
            <person name="Ambrose K.D."/>
            <person name="Ansari-Lari M.A."/>
            <person name="Aradhya S."/>
            <person name="Ashwell R.I."/>
            <person name="Babbage A.K."/>
            <person name="Bagguley C.L."/>
            <person name="Ballabio A."/>
            <person name="Banerjee R."/>
            <person name="Barker G.E."/>
            <person name="Barlow K.F."/>
            <person name="Barrett I.P."/>
            <person name="Bates K.N."/>
            <person name="Beare D.M."/>
            <person name="Beasley H."/>
            <person name="Beasley O."/>
            <person name="Beck A."/>
            <person name="Bethel G."/>
            <person name="Blechschmidt K."/>
            <person name="Brady N."/>
            <person name="Bray-Allen S."/>
            <person name="Bridgeman A.M."/>
            <person name="Brown A.J."/>
            <person name="Brown M.J."/>
            <person name="Bonnin D."/>
            <person name="Bruford E.A."/>
            <person name="Buhay C."/>
            <person name="Burch P."/>
            <person name="Burford D."/>
            <person name="Burgess J."/>
            <person name="Burrill W."/>
            <person name="Burton J."/>
            <person name="Bye J.M."/>
            <person name="Carder C."/>
            <person name="Carrel L."/>
            <person name="Chako J."/>
            <person name="Chapman J.C."/>
            <person name="Chavez D."/>
            <person name="Chen E."/>
            <person name="Chen G."/>
            <person name="Chen Y."/>
            <person name="Chen Z."/>
            <person name="Chinault C."/>
            <person name="Ciccodicola A."/>
            <person name="Clark S.Y."/>
            <person name="Clarke G."/>
            <person name="Clee C.M."/>
            <person name="Clegg S."/>
            <person name="Clerc-Blankenburg K."/>
            <person name="Clifford K."/>
            <person name="Cobley V."/>
            <person name="Cole C.G."/>
            <person name="Conquer J.S."/>
            <person name="Corby N."/>
            <person name="Connor R.E."/>
            <person name="David R."/>
            <person name="Davies J."/>
            <person name="Davis C."/>
            <person name="Davis J."/>
            <person name="Delgado O."/>
            <person name="Deshazo D."/>
            <person name="Dhami P."/>
            <person name="Ding Y."/>
            <person name="Dinh H."/>
            <person name="Dodsworth S."/>
            <person name="Draper H."/>
            <person name="Dugan-Rocha S."/>
            <person name="Dunham A."/>
            <person name="Dunn M."/>
            <person name="Durbin K.J."/>
            <person name="Dutta I."/>
            <person name="Eades T."/>
            <person name="Ellwood M."/>
            <person name="Emery-Cohen A."/>
            <person name="Errington H."/>
            <person name="Evans K.L."/>
            <person name="Faulkner L."/>
            <person name="Francis F."/>
            <person name="Frankland J."/>
            <person name="Fraser A.E."/>
            <person name="Galgoczy P."/>
            <person name="Gilbert J."/>
            <person name="Gill R."/>
            <person name="Gloeckner G."/>
            <person name="Gregory S.G."/>
            <person name="Gribble S."/>
            <person name="Griffiths C."/>
            <person name="Grocock R."/>
            <person name="Gu Y."/>
            <person name="Gwilliam R."/>
            <person name="Hamilton C."/>
            <person name="Hart E.A."/>
            <person name="Hawes A."/>
            <person name="Heath P.D."/>
            <person name="Heitmann K."/>
            <person name="Hennig S."/>
            <person name="Hernandez J."/>
            <person name="Hinzmann B."/>
            <person name="Ho S."/>
            <person name="Hoffs M."/>
            <person name="Howden P.J."/>
            <person name="Huckle E.J."/>
            <person name="Hume J."/>
            <person name="Hunt P.J."/>
            <person name="Hunt A.R."/>
            <person name="Isherwood J."/>
            <person name="Jacob L."/>
            <person name="Johnson D."/>
            <person name="Jones S."/>
            <person name="de Jong P.J."/>
            <person name="Joseph S.S."/>
            <person name="Keenan S."/>
            <person name="Kelly S."/>
            <person name="Kershaw J.K."/>
            <person name="Khan Z."/>
            <person name="Kioschis P."/>
            <person name="Klages S."/>
            <person name="Knights A.J."/>
            <person name="Kosiura A."/>
            <person name="Kovar-Smith C."/>
            <person name="Laird G.K."/>
            <person name="Langford C."/>
            <person name="Lawlor S."/>
            <person name="Leversha M."/>
            <person name="Lewis L."/>
            <person name="Liu W."/>
            <person name="Lloyd C."/>
            <person name="Lloyd D.M."/>
            <person name="Loulseged H."/>
            <person name="Loveland J.E."/>
            <person name="Lovell J.D."/>
            <person name="Lozado R."/>
            <person name="Lu J."/>
            <person name="Lyne R."/>
            <person name="Ma J."/>
            <person name="Maheshwari M."/>
            <person name="Matthews L.H."/>
            <person name="McDowall J."/>
            <person name="McLaren S."/>
            <person name="McMurray A."/>
            <person name="Meidl P."/>
            <person name="Meitinger T."/>
            <person name="Milne S."/>
            <person name="Miner G."/>
            <person name="Mistry S.L."/>
            <person name="Morgan M."/>
            <person name="Morris S."/>
            <person name="Mueller I."/>
            <person name="Mullikin J.C."/>
            <person name="Nguyen N."/>
            <person name="Nordsiek G."/>
            <person name="Nyakatura G."/>
            <person name="O'dell C.N."/>
            <person name="Okwuonu G."/>
            <person name="Palmer S."/>
            <person name="Pandian R."/>
            <person name="Parker D."/>
            <person name="Parrish J."/>
            <person name="Pasternak S."/>
            <person name="Patel D."/>
            <person name="Pearce A.V."/>
            <person name="Pearson D.M."/>
            <person name="Pelan S.E."/>
            <person name="Perez L."/>
            <person name="Porter K.M."/>
            <person name="Ramsey Y."/>
            <person name="Reichwald K."/>
            <person name="Rhodes S."/>
            <person name="Ridler K.A."/>
            <person name="Schlessinger D."/>
            <person name="Schueler M.G."/>
            <person name="Sehra H.K."/>
            <person name="Shaw-Smith C."/>
            <person name="Shen H."/>
            <person name="Sheridan E.M."/>
            <person name="Shownkeen R."/>
            <person name="Skuce C.D."/>
            <person name="Smith M.L."/>
            <person name="Sotheran E.C."/>
            <person name="Steingruber H.E."/>
            <person name="Steward C.A."/>
            <person name="Storey R."/>
            <person name="Swann R.M."/>
            <person name="Swarbreck D."/>
            <person name="Tabor P.E."/>
            <person name="Taudien S."/>
            <person name="Taylor T."/>
            <person name="Teague B."/>
            <person name="Thomas K."/>
            <person name="Thorpe A."/>
            <person name="Timms K."/>
            <person name="Tracey A."/>
            <person name="Trevanion S."/>
            <person name="Tromans A.C."/>
            <person name="d'Urso M."/>
            <person name="Verduzco D."/>
            <person name="Villasana D."/>
            <person name="Waldron L."/>
            <person name="Wall M."/>
            <person name="Wang Q."/>
            <person name="Warren J."/>
            <person name="Warry G.L."/>
            <person name="Wei X."/>
            <person name="West A."/>
            <person name="Whitehead S.L."/>
            <person name="Whiteley M.N."/>
            <person name="Wilkinson J.E."/>
            <person name="Willey D.L."/>
            <person name="Williams G."/>
            <person name="Williams L."/>
            <person name="Williamson A."/>
            <person name="Williamson H."/>
            <person name="Wilming L."/>
            <person name="Woodmansey R.L."/>
            <person name="Wray P.W."/>
            <person name="Yen J."/>
            <person name="Zhang J."/>
            <person name="Zhou J."/>
            <person name="Zoghbi H."/>
            <person name="Zorilla S."/>
            <person name="Buck D."/>
            <person name="Reinhardt R."/>
            <person name="Poustka A."/>
            <person name="Rosenthal A."/>
            <person name="Lehrach H."/>
            <person name="Meindl A."/>
            <person name="Minx P.J."/>
            <person name="Hillier L.W."/>
            <person name="Willard H.F."/>
            <person name="Wilson R.K."/>
            <person name="Waterston R.H."/>
            <person name="Rice C.M."/>
            <person name="Vaudin M."/>
            <person name="Coulson A."/>
            <person name="Nelson D.L."/>
            <person name="Weinstock G."/>
            <person name="Sulston J.E."/>
            <person name="Durbin R.M."/>
            <person name="Hubbard T."/>
            <person name="Gibbs R.A."/>
            <person name="Beck S."/>
            <person name="Rogers J."/>
            <person name="Bentley D.R."/>
        </authorList>
    </citation>
    <scope>NUCLEOTIDE SEQUENCE [LARGE SCALE GENOMIC DNA]</scope>
</reference>
<reference key="4">
    <citation type="submission" date="2005-09" db="EMBL/GenBank/DDBJ databases">
        <authorList>
            <person name="Mural R.J."/>
            <person name="Istrail S."/>
            <person name="Sutton G.G."/>
            <person name="Florea L."/>
            <person name="Halpern A.L."/>
            <person name="Mobarry C.M."/>
            <person name="Lippert R."/>
            <person name="Walenz B."/>
            <person name="Shatkay H."/>
            <person name="Dew I."/>
            <person name="Miller J.R."/>
            <person name="Flanigan M.J."/>
            <person name="Edwards N.J."/>
            <person name="Bolanos R."/>
            <person name="Fasulo D."/>
            <person name="Halldorsson B.V."/>
            <person name="Hannenhalli S."/>
            <person name="Turner R."/>
            <person name="Yooseph S."/>
            <person name="Lu F."/>
            <person name="Nusskern D.R."/>
            <person name="Shue B.C."/>
            <person name="Zheng X.H."/>
            <person name="Zhong F."/>
            <person name="Delcher A.L."/>
            <person name="Huson D.H."/>
            <person name="Kravitz S.A."/>
            <person name="Mouchard L."/>
            <person name="Reinert K."/>
            <person name="Remington K.A."/>
            <person name="Clark A.G."/>
            <person name="Waterman M.S."/>
            <person name="Eichler E.E."/>
            <person name="Adams M.D."/>
            <person name="Hunkapiller M.W."/>
            <person name="Myers E.W."/>
            <person name="Venter J.C."/>
        </authorList>
    </citation>
    <scope>NUCLEOTIDE SEQUENCE [LARGE SCALE GENOMIC DNA]</scope>
</reference>
<reference key="5">
    <citation type="journal article" date="2004" name="Genome Res.">
        <title>The status, quality, and expansion of the NIH full-length cDNA project: the Mammalian Gene Collection (MGC).</title>
        <authorList>
            <consortium name="The MGC Project Team"/>
        </authorList>
    </citation>
    <scope>NUCLEOTIDE SEQUENCE [LARGE SCALE MRNA] (ISOFORM 3)</scope>
    <source>
        <tissue>Brain</tissue>
    </source>
</reference>
<reference key="6">
    <citation type="journal article" date="2007" name="Nature">
        <title>Patterns of somatic mutation in human cancer genomes.</title>
        <authorList>
            <person name="Greenman C."/>
            <person name="Stephens P."/>
            <person name="Smith R."/>
            <person name="Dalgliesh G.L."/>
            <person name="Hunter C."/>
            <person name="Bignell G."/>
            <person name="Davies H."/>
            <person name="Teague J."/>
            <person name="Butler A."/>
            <person name="Stevens C."/>
            <person name="Edkins S."/>
            <person name="O'Meara S."/>
            <person name="Vastrik I."/>
            <person name="Schmidt E.E."/>
            <person name="Avis T."/>
            <person name="Barthorpe S."/>
            <person name="Bhamra G."/>
            <person name="Buck G."/>
            <person name="Choudhury B."/>
            <person name="Clements J."/>
            <person name="Cole J."/>
            <person name="Dicks E."/>
            <person name="Forbes S."/>
            <person name="Gray K."/>
            <person name="Halliday K."/>
            <person name="Harrison R."/>
            <person name="Hills K."/>
            <person name="Hinton J."/>
            <person name="Jenkinson A."/>
            <person name="Jones D."/>
            <person name="Menzies A."/>
            <person name="Mironenko T."/>
            <person name="Perry J."/>
            <person name="Raine K."/>
            <person name="Richardson D."/>
            <person name="Shepherd R."/>
            <person name="Small A."/>
            <person name="Tofts C."/>
            <person name="Varian J."/>
            <person name="Webb T."/>
            <person name="West S."/>
            <person name="Widaa S."/>
            <person name="Yates A."/>
            <person name="Cahill D.P."/>
            <person name="Louis D.N."/>
            <person name="Goldstraw P."/>
            <person name="Nicholson A.G."/>
            <person name="Brasseur F."/>
            <person name="Looijenga L."/>
            <person name="Weber B.L."/>
            <person name="Chiew Y.-E."/>
            <person name="DeFazio A."/>
            <person name="Greaves M.F."/>
            <person name="Green A.R."/>
            <person name="Campbell P."/>
            <person name="Birney E."/>
            <person name="Easton D.F."/>
            <person name="Chenevix-Trench G."/>
            <person name="Tan M.-H."/>
            <person name="Khoo S.K."/>
            <person name="Teh B.T."/>
            <person name="Yuen S.T."/>
            <person name="Leung S.Y."/>
            <person name="Wooster R."/>
            <person name="Futreal P.A."/>
            <person name="Stratton M.R."/>
        </authorList>
    </citation>
    <scope>VARIANT [LARGE SCALE ANALYSIS] HIS-262</scope>
</reference>
<name>KCC1B_HUMAN</name>
<sequence>MLLLKKHTEDISSVYEIRERLGSGAFSEVVLAQERGSAHLVALKCIPKKALRGKEALVENEIAVLRRISHPNIVALEDVHESPSHLYLAMELVTGGELFDRIMERGSYTEKDASHLVGQVLGAVSYLHSLGIVHRDLKPENLLYATPFEDSKIMVSDFGLSKIQAGNMLGTACGTPGYVAPELLEQKPYGKAVDVWALGVISYILLCGYPPFYDESDPELFSQILRASYEFDSPFWDDISESAKDFIRHLLERDPQKRFTCQQALRHLWISGDTAFDRDILGSVSEQIRKNFARTHWKRAFNATSFLRHIRKLGQIPEGEGASEQGMARHSHSGLRAGQPPKW</sequence>
<organism>
    <name type="scientific">Homo sapiens</name>
    <name type="common">Human</name>
    <dbReference type="NCBI Taxonomy" id="9606"/>
    <lineage>
        <taxon>Eukaryota</taxon>
        <taxon>Metazoa</taxon>
        <taxon>Chordata</taxon>
        <taxon>Craniata</taxon>
        <taxon>Vertebrata</taxon>
        <taxon>Euteleostomi</taxon>
        <taxon>Mammalia</taxon>
        <taxon>Eutheria</taxon>
        <taxon>Euarchontoglires</taxon>
        <taxon>Primates</taxon>
        <taxon>Haplorrhini</taxon>
        <taxon>Catarrhini</taxon>
        <taxon>Hominidae</taxon>
        <taxon>Homo</taxon>
    </lineage>
</organism>
<feature type="chain" id="PRO_0000086079" description="Calcium/calmodulin-dependent protein kinase type 1B">
    <location>
        <begin position="1"/>
        <end position="343"/>
    </location>
</feature>
<feature type="domain" description="Protein kinase" evidence="2">
    <location>
        <begin position="15"/>
        <end position="270"/>
    </location>
</feature>
<feature type="region of interest" description="Calmodulin-binding" evidence="1">
    <location>
        <begin position="290"/>
        <end position="311"/>
    </location>
</feature>
<feature type="region of interest" description="Disordered" evidence="4">
    <location>
        <begin position="319"/>
        <end position="343"/>
    </location>
</feature>
<feature type="active site" description="Proton acceptor" evidence="2 3">
    <location>
        <position position="136"/>
    </location>
</feature>
<feature type="binding site" evidence="2">
    <location>
        <begin position="21"/>
        <end position="29"/>
    </location>
    <ligand>
        <name>ATP</name>
        <dbReference type="ChEBI" id="CHEBI:30616"/>
    </ligand>
</feature>
<feature type="binding site" evidence="2">
    <location>
        <position position="44"/>
    </location>
    <ligand>
        <name>ATP</name>
        <dbReference type="ChEBI" id="CHEBI:30616"/>
    </ligand>
</feature>
<feature type="splice variant" id="VSP_012634" description="In isoform 3." evidence="7">
    <location>
        <begin position="1"/>
        <end position="102"/>
    </location>
</feature>
<feature type="splice variant" id="VSP_039091" description="In isoform 4." evidence="6">
    <original>M</original>
    <variation>MEAAFGQVAGSACPRRGGEGRDWKAESLADLWPKSSPGDSHRWCKGPGAGPAGPQLREAARASSGLGGGGRHPSRIPAIALQDM</variation>
    <location>
        <position position="1"/>
    </location>
</feature>
<feature type="splice variant" id="VSP_043373" description="In isoform 5." evidence="6">
    <original>M</original>
    <variation>MWRRVCGGLAGRRPSGDM</variation>
    <location>
        <position position="1"/>
    </location>
</feature>
<feature type="splice variant" id="VSP_012635" description="In isoform 2." evidence="8">
    <original>V</original>
    <variation>AEPVTLSGMAACVPVRASVCLWPP</variation>
    <location>
        <position position="179"/>
    </location>
</feature>
<feature type="sequence variant" id="VAR_040598" description="In dbSNP:rs56060609." evidence="5">
    <original>Q</original>
    <variation>H</variation>
    <location>
        <position position="262"/>
    </location>
</feature>
<feature type="sequence conflict" description="In Ref. 1; BAG58930." evidence="9" ref="1">
    <original>L</original>
    <variation>P</variation>
    <location>
        <position position="127"/>
    </location>
</feature>
<keyword id="KW-0025">Alternative splicing</keyword>
<keyword id="KW-0067">ATP-binding</keyword>
<keyword id="KW-0106">Calcium</keyword>
<keyword id="KW-0112">Calmodulin-binding</keyword>
<keyword id="KW-0963">Cytoplasm</keyword>
<keyword id="KW-0418">Kinase</keyword>
<keyword id="KW-0547">Nucleotide-binding</keyword>
<keyword id="KW-0539">Nucleus</keyword>
<keyword id="KW-0597">Phosphoprotein</keyword>
<keyword id="KW-1267">Proteomics identification</keyword>
<keyword id="KW-1185">Reference proteome</keyword>
<keyword id="KW-0723">Serine/threonine-protein kinase</keyword>
<keyword id="KW-0808">Transferase</keyword>
<comment type="function">
    <text evidence="1">Calcium/calmodulin-dependent protein kinase belonging to a proposed calcium-triggered signaling cascade. In vitro phosphorylates CREB1 and SYN1/synapsin I. Phosphorylates and activates CAMK1 (By similarity).</text>
</comment>
<comment type="catalytic activity">
    <reaction>
        <text>L-seryl-[protein] + ATP = O-phospho-L-seryl-[protein] + ADP + H(+)</text>
        <dbReference type="Rhea" id="RHEA:17989"/>
        <dbReference type="Rhea" id="RHEA-COMP:9863"/>
        <dbReference type="Rhea" id="RHEA-COMP:11604"/>
        <dbReference type="ChEBI" id="CHEBI:15378"/>
        <dbReference type="ChEBI" id="CHEBI:29999"/>
        <dbReference type="ChEBI" id="CHEBI:30616"/>
        <dbReference type="ChEBI" id="CHEBI:83421"/>
        <dbReference type="ChEBI" id="CHEBI:456216"/>
        <dbReference type="EC" id="2.7.11.17"/>
    </reaction>
</comment>
<comment type="catalytic activity">
    <reaction>
        <text>L-threonyl-[protein] + ATP = O-phospho-L-threonyl-[protein] + ADP + H(+)</text>
        <dbReference type="Rhea" id="RHEA:46608"/>
        <dbReference type="Rhea" id="RHEA-COMP:11060"/>
        <dbReference type="Rhea" id="RHEA-COMP:11605"/>
        <dbReference type="ChEBI" id="CHEBI:15378"/>
        <dbReference type="ChEBI" id="CHEBI:30013"/>
        <dbReference type="ChEBI" id="CHEBI:30616"/>
        <dbReference type="ChEBI" id="CHEBI:61977"/>
        <dbReference type="ChEBI" id="CHEBI:456216"/>
        <dbReference type="EC" id="2.7.11.17"/>
    </reaction>
</comment>
<comment type="activity regulation">
    <text evidence="1">Activated by Ca(2+)/calmodulin.</text>
</comment>
<comment type="subcellular location">
    <subcellularLocation>
        <location evidence="1">Cytoplasm</location>
    </subcellularLocation>
    <subcellularLocation>
        <location evidence="1">Nucleus</location>
    </subcellularLocation>
</comment>
<comment type="alternative products">
    <event type="alternative splicing"/>
    <isoform>
        <id>Q6P2M8-1</id>
        <name>1</name>
        <sequence type="displayed"/>
    </isoform>
    <isoform>
        <id>Q6P2M8-2</id>
        <name>2</name>
        <sequence type="described" ref="VSP_012635"/>
    </isoform>
    <isoform>
        <id>Q6P2M8-3</id>
        <name>3</name>
        <sequence type="described" ref="VSP_012634"/>
    </isoform>
    <isoform>
        <id>Q6P2M8-5</id>
        <name>4</name>
        <sequence type="described" ref="VSP_039091"/>
    </isoform>
    <isoform>
        <id>Q6P2M8-6</id>
        <name>5</name>
        <sequence type="described" ref="VSP_043373"/>
    </isoform>
</comment>
<comment type="PTM">
    <text evidence="9">Phosphorylated by CAMKK1.</text>
</comment>
<comment type="similarity">
    <text evidence="9">Belongs to the protein kinase superfamily. CAMK Ser/Thr protein kinase family. CaMK subfamily.</text>
</comment>
<dbReference type="EC" id="2.7.11.17"/>
<dbReference type="EMBL" id="AK296203">
    <property type="protein sequence ID" value="BAG58930.1"/>
    <property type="molecule type" value="mRNA"/>
</dbReference>
<dbReference type="EMBL" id="AK303746">
    <property type="protein sequence ID" value="BAG64718.1"/>
    <property type="molecule type" value="mRNA"/>
</dbReference>
<dbReference type="EMBL" id="CR611192">
    <property type="status" value="NOT_ANNOTATED_CDS"/>
    <property type="molecule type" value="mRNA"/>
</dbReference>
<dbReference type="EMBL" id="U52111">
    <property type="status" value="NOT_ANNOTATED_CDS"/>
    <property type="molecule type" value="Genomic_DNA"/>
</dbReference>
<dbReference type="EMBL" id="CH471172">
    <property type="protein sequence ID" value="EAW72838.1"/>
    <property type="molecule type" value="Genomic_DNA"/>
</dbReference>
<dbReference type="EMBL" id="CH471172">
    <property type="protein sequence ID" value="EAW72839.1"/>
    <property type="molecule type" value="Genomic_DNA"/>
</dbReference>
<dbReference type="EMBL" id="CH471172">
    <property type="protein sequence ID" value="EAW72841.1"/>
    <property type="molecule type" value="Genomic_DNA"/>
</dbReference>
<dbReference type="EMBL" id="CH471172">
    <property type="protein sequence ID" value="EAW72842.1"/>
    <property type="molecule type" value="Genomic_DNA"/>
</dbReference>
<dbReference type="EMBL" id="CH471172">
    <property type="protein sequence ID" value="EAW72843.1"/>
    <property type="molecule type" value="Genomic_DNA"/>
</dbReference>
<dbReference type="EMBL" id="CH471172">
    <property type="protein sequence ID" value="EAW72845.1"/>
    <property type="molecule type" value="Genomic_DNA"/>
</dbReference>
<dbReference type="EMBL" id="BC064422">
    <property type="protein sequence ID" value="AAH64422.1"/>
    <property type="molecule type" value="mRNA"/>
</dbReference>
<dbReference type="CCDS" id="CCDS35503.2">
    <molecule id="Q6P2M8-5"/>
</dbReference>
<dbReference type="CCDS" id="CCDS48189.1">
    <molecule id="Q6P2M8-6"/>
</dbReference>
<dbReference type="CCDS" id="CCDS94698.1">
    <molecule id="Q6P2M8-1"/>
</dbReference>
<dbReference type="RefSeq" id="NP_001034671.3">
    <molecule id="Q6P2M8-5"/>
    <property type="nucleotide sequence ID" value="NM_001039582.3"/>
</dbReference>
<dbReference type="RefSeq" id="NP_001129212.1">
    <molecule id="Q6P2M8-6"/>
    <property type="nucleotide sequence ID" value="NM_001135740.2"/>
</dbReference>
<dbReference type="RefSeq" id="NP_001353904.1">
    <molecule id="Q6P2M8-1"/>
    <property type="nucleotide sequence ID" value="NM_001366975.1"/>
</dbReference>
<dbReference type="RefSeq" id="NP_001353905.1">
    <molecule id="Q6P2M8-1"/>
    <property type="nucleotide sequence ID" value="NM_001366976.1"/>
</dbReference>
<dbReference type="RefSeq" id="NP_001353906.1">
    <molecule id="Q6P2M8-1"/>
    <property type="nucleotide sequence ID" value="NM_001366977.1"/>
</dbReference>
<dbReference type="RefSeq" id="NP_001353907.1">
    <molecule id="Q6P2M8-1"/>
    <property type="nucleotide sequence ID" value="NM_001366978.1"/>
</dbReference>
<dbReference type="RefSeq" id="NP_001353908.1">
    <molecule id="Q6P2M8-1"/>
    <property type="nucleotide sequence ID" value="NM_001366979.1"/>
</dbReference>
<dbReference type="RefSeq" id="NP_001353909.1">
    <molecule id="Q6P2M8-1"/>
    <property type="nucleotide sequence ID" value="NM_001366980.1"/>
</dbReference>
<dbReference type="RefSeq" id="XP_005274708.1">
    <property type="nucleotide sequence ID" value="XM_005274651.2"/>
</dbReference>
<dbReference type="RefSeq" id="XP_006724872.1">
    <property type="nucleotide sequence ID" value="XM_006724809.3"/>
</dbReference>
<dbReference type="RefSeq" id="XP_011529409.2">
    <molecule id="Q6P2M8-1"/>
    <property type="nucleotide sequence ID" value="XM_011531107.3"/>
</dbReference>
<dbReference type="RefSeq" id="XP_011529412.1">
    <property type="nucleotide sequence ID" value="XM_011531110.2"/>
</dbReference>
<dbReference type="RefSeq" id="XP_011529413.1">
    <molecule id="Q6P2M8-1"/>
    <property type="nucleotide sequence ID" value="XM_011531111.3"/>
</dbReference>
<dbReference type="RefSeq" id="XP_011529414.1">
    <molecule id="Q6P2M8-1"/>
    <property type="nucleotide sequence ID" value="XM_011531112.3"/>
</dbReference>
<dbReference type="RefSeq" id="XP_016884766.1">
    <property type="nucleotide sequence ID" value="XM_017029277.1"/>
</dbReference>
<dbReference type="RefSeq" id="XP_016884767.1">
    <property type="nucleotide sequence ID" value="XM_017029278.1"/>
</dbReference>
<dbReference type="RefSeq" id="XP_016884768.1">
    <molecule id="Q6P2M8-1"/>
    <property type="nucleotide sequence ID" value="XM_017029279.2"/>
</dbReference>
<dbReference type="RefSeq" id="XP_024308108.1">
    <molecule id="Q6P2M8-1"/>
    <property type="nucleotide sequence ID" value="XM_024452340.2"/>
</dbReference>
<dbReference type="RefSeq" id="XP_047297792.1">
    <molecule id="Q6P2M8-1"/>
    <property type="nucleotide sequence ID" value="XM_047441836.1"/>
</dbReference>
<dbReference type="RefSeq" id="XP_047297793.1">
    <molecule id="Q6P2M8-1"/>
    <property type="nucleotide sequence ID" value="XM_047441837.1"/>
</dbReference>
<dbReference type="RefSeq" id="XP_047297794.1">
    <molecule id="Q6P2M8-1"/>
    <property type="nucleotide sequence ID" value="XM_047441838.1"/>
</dbReference>
<dbReference type="RefSeq" id="XP_047297795.1">
    <molecule id="Q6P2M8-1"/>
    <property type="nucleotide sequence ID" value="XM_047441839.1"/>
</dbReference>
<dbReference type="RefSeq" id="XP_054182470.1">
    <molecule id="Q6P2M8-1"/>
    <property type="nucleotide sequence ID" value="XM_054326495.1"/>
</dbReference>
<dbReference type="RefSeq" id="XP_054182471.1">
    <molecule id="Q6P2M8-1"/>
    <property type="nucleotide sequence ID" value="XM_054326496.1"/>
</dbReference>
<dbReference type="RefSeq" id="XP_054182472.1">
    <molecule id="Q6P2M8-1"/>
    <property type="nucleotide sequence ID" value="XM_054326497.1"/>
</dbReference>
<dbReference type="RefSeq" id="XP_054182473.1">
    <molecule id="Q6P2M8-1"/>
    <property type="nucleotide sequence ID" value="XM_054326498.1"/>
</dbReference>
<dbReference type="RefSeq" id="XP_054182474.1">
    <molecule id="Q6P2M8-1"/>
    <property type="nucleotide sequence ID" value="XM_054326499.1"/>
</dbReference>
<dbReference type="RefSeq" id="XP_054182475.1">
    <molecule id="Q6P2M8-1"/>
    <property type="nucleotide sequence ID" value="XM_054326500.1"/>
</dbReference>
<dbReference type="RefSeq" id="XP_054182476.1">
    <molecule id="Q6P2M8-1"/>
    <property type="nucleotide sequence ID" value="XM_054326501.1"/>
</dbReference>
<dbReference type="RefSeq" id="XP_054182477.1">
    <molecule id="Q6P2M8-1"/>
    <property type="nucleotide sequence ID" value="XM_054326502.1"/>
</dbReference>
<dbReference type="RefSeq" id="XP_054182478.1">
    <molecule id="Q6P2M8-1"/>
    <property type="nucleotide sequence ID" value="XM_054326503.1"/>
</dbReference>
<dbReference type="SMR" id="Q6P2M8"/>
<dbReference type="BioGRID" id="126582">
    <property type="interactions" value="1"/>
</dbReference>
<dbReference type="FunCoup" id="Q6P2M8">
    <property type="interactions" value="471"/>
</dbReference>
<dbReference type="IntAct" id="Q6P2M8">
    <property type="interactions" value="2"/>
</dbReference>
<dbReference type="STRING" id="9606.ENSP00000405950"/>
<dbReference type="BindingDB" id="Q6P2M8"/>
<dbReference type="ChEMBL" id="CHEMBL3627592"/>
<dbReference type="iPTMnet" id="Q6P2M8"/>
<dbReference type="PhosphoSitePlus" id="Q6P2M8"/>
<dbReference type="BioMuta" id="PNCK"/>
<dbReference type="DMDM" id="67466915"/>
<dbReference type="jPOST" id="Q6P2M8"/>
<dbReference type="MassIVE" id="Q6P2M8"/>
<dbReference type="PaxDb" id="9606-ENSP00000405950"/>
<dbReference type="PeptideAtlas" id="Q6P2M8"/>
<dbReference type="ProteomicsDB" id="66908">
    <molecule id="Q6P2M8-1"/>
</dbReference>
<dbReference type="ProteomicsDB" id="66909">
    <molecule id="Q6P2M8-2"/>
</dbReference>
<dbReference type="ProteomicsDB" id="66910">
    <molecule id="Q6P2M8-3"/>
</dbReference>
<dbReference type="ProteomicsDB" id="66911">
    <molecule id="Q6P2M8-5"/>
</dbReference>
<dbReference type="ProteomicsDB" id="66912">
    <molecule id="Q6P2M8-6"/>
</dbReference>
<dbReference type="Antibodypedia" id="2076">
    <property type="antibodies" value="204 antibodies from 26 providers"/>
</dbReference>
<dbReference type="DNASU" id="139728"/>
<dbReference type="Ensembl" id="ENST00000340888.8">
    <molecule id="Q6P2M8-1"/>
    <property type="protein sequence ID" value="ENSP00000340586.4"/>
    <property type="gene ID" value="ENSG00000130822.16"/>
</dbReference>
<dbReference type="Ensembl" id="ENST00000370142.5">
    <molecule id="Q6P2M8-2"/>
    <property type="protein sequence ID" value="ENSP00000359161.1"/>
    <property type="gene ID" value="ENSG00000130822.16"/>
</dbReference>
<dbReference type="Ensembl" id="ENST00000370145.8">
    <molecule id="Q6P2M8-6"/>
    <property type="protein sequence ID" value="ENSP00000359164.4"/>
    <property type="gene ID" value="ENSG00000130822.16"/>
</dbReference>
<dbReference type="Ensembl" id="ENST00000370150.5">
    <molecule id="Q6P2M8-1"/>
    <property type="protein sequence ID" value="ENSP00000359169.1"/>
    <property type="gene ID" value="ENSG00000130822.16"/>
</dbReference>
<dbReference type="Ensembl" id="ENST00000447676.6">
    <molecule id="Q6P2M8-5"/>
    <property type="protein sequence ID" value="ENSP00000405950.2"/>
    <property type="gene ID" value="ENSG00000130822.16"/>
</dbReference>
<dbReference type="GeneID" id="139728"/>
<dbReference type="KEGG" id="hsa:139728"/>
<dbReference type="MANE-Select" id="ENST00000340888.8">
    <property type="protein sequence ID" value="ENSP00000340586.4"/>
    <property type="RefSeq nucleotide sequence ID" value="NM_001366977.1"/>
    <property type="RefSeq protein sequence ID" value="NP_001353906.1"/>
</dbReference>
<dbReference type="UCSC" id="uc011myt.3">
    <molecule id="Q6P2M8-1"/>
    <property type="organism name" value="human"/>
</dbReference>
<dbReference type="AGR" id="HGNC:13415"/>
<dbReference type="CTD" id="139728"/>
<dbReference type="DisGeNET" id="139728"/>
<dbReference type="GeneCards" id="PNCK"/>
<dbReference type="HGNC" id="HGNC:13415">
    <property type="gene designation" value="PNCK"/>
</dbReference>
<dbReference type="HPA" id="ENSG00000130822">
    <property type="expression patterns" value="Tissue enhanced (brain, intestine)"/>
</dbReference>
<dbReference type="MIM" id="300680">
    <property type="type" value="gene"/>
</dbReference>
<dbReference type="neXtProt" id="NX_Q6P2M8"/>
<dbReference type="OpenTargets" id="ENSG00000130822"/>
<dbReference type="PharmGKB" id="PA134988711"/>
<dbReference type="VEuPathDB" id="HostDB:ENSG00000130822"/>
<dbReference type="eggNOG" id="KOG0032">
    <property type="taxonomic scope" value="Eukaryota"/>
</dbReference>
<dbReference type="GeneTree" id="ENSGT00940000162187"/>
<dbReference type="InParanoid" id="Q6P2M8"/>
<dbReference type="OrthoDB" id="40902at2759"/>
<dbReference type="PAN-GO" id="Q6P2M8">
    <property type="GO annotations" value="4 GO annotations based on evolutionary models"/>
</dbReference>
<dbReference type="PhylomeDB" id="Q6P2M8"/>
<dbReference type="TreeFam" id="TF314166"/>
<dbReference type="PathwayCommons" id="Q6P2M8"/>
<dbReference type="SignaLink" id="Q6P2M8"/>
<dbReference type="SIGNOR" id="Q6P2M8"/>
<dbReference type="BioGRID-ORCS" id="139728">
    <property type="hits" value="18 hits in 811 CRISPR screens"/>
</dbReference>
<dbReference type="ChiTaRS" id="PNCK">
    <property type="organism name" value="human"/>
</dbReference>
<dbReference type="GenomeRNAi" id="139728"/>
<dbReference type="Pharos" id="Q6P2M8">
    <property type="development level" value="Tchem"/>
</dbReference>
<dbReference type="PRO" id="PR:Q6P2M8"/>
<dbReference type="Proteomes" id="UP000005640">
    <property type="component" value="Chromosome X"/>
</dbReference>
<dbReference type="RNAct" id="Q6P2M8">
    <property type="molecule type" value="protein"/>
</dbReference>
<dbReference type="Bgee" id="ENSG00000130822">
    <property type="expression patterns" value="Expressed in right frontal lobe and 121 other cell types or tissues"/>
</dbReference>
<dbReference type="ExpressionAtlas" id="Q6P2M8">
    <property type="expression patterns" value="baseline and differential"/>
</dbReference>
<dbReference type="GO" id="GO:0005737">
    <property type="term" value="C:cytoplasm"/>
    <property type="evidence" value="ECO:0000318"/>
    <property type="project" value="GO_Central"/>
</dbReference>
<dbReference type="GO" id="GO:0005634">
    <property type="term" value="C:nucleus"/>
    <property type="evidence" value="ECO:0007669"/>
    <property type="project" value="UniProtKB-SubCell"/>
</dbReference>
<dbReference type="GO" id="GO:0005524">
    <property type="term" value="F:ATP binding"/>
    <property type="evidence" value="ECO:0007669"/>
    <property type="project" value="UniProtKB-KW"/>
</dbReference>
<dbReference type="GO" id="GO:0004683">
    <property type="term" value="F:calcium/calmodulin-dependent protein kinase activity"/>
    <property type="evidence" value="ECO:0000318"/>
    <property type="project" value="GO_Central"/>
</dbReference>
<dbReference type="GO" id="GO:0005516">
    <property type="term" value="F:calmodulin binding"/>
    <property type="evidence" value="ECO:0000318"/>
    <property type="project" value="GO_Central"/>
</dbReference>
<dbReference type="GO" id="GO:0106310">
    <property type="term" value="F:protein serine kinase activity"/>
    <property type="evidence" value="ECO:0007669"/>
    <property type="project" value="RHEA"/>
</dbReference>
<dbReference type="GO" id="GO:0007165">
    <property type="term" value="P:signal transduction"/>
    <property type="evidence" value="ECO:0000318"/>
    <property type="project" value="GO_Central"/>
</dbReference>
<dbReference type="CDD" id="cd14169">
    <property type="entry name" value="STKc_CaMKI_beta"/>
    <property type="match status" value="1"/>
</dbReference>
<dbReference type="FunFam" id="1.10.510.10:FF:000026">
    <property type="entry name" value="Calcium/calmodulin-dependent protein kinase type 1"/>
    <property type="match status" value="1"/>
</dbReference>
<dbReference type="FunFam" id="3.30.200.20:FF:000345">
    <property type="entry name" value="Calcium/calmodulin-dependent protein kinase type 1B"/>
    <property type="match status" value="1"/>
</dbReference>
<dbReference type="Gene3D" id="3.30.200.20">
    <property type="entry name" value="Phosphorylase Kinase, domain 1"/>
    <property type="match status" value="1"/>
</dbReference>
<dbReference type="Gene3D" id="1.10.510.10">
    <property type="entry name" value="Transferase(Phosphotransferase) domain 1"/>
    <property type="match status" value="1"/>
</dbReference>
<dbReference type="InterPro" id="IPR042696">
    <property type="entry name" value="CaMKI_beta_STKc"/>
</dbReference>
<dbReference type="InterPro" id="IPR011009">
    <property type="entry name" value="Kinase-like_dom_sf"/>
</dbReference>
<dbReference type="InterPro" id="IPR000719">
    <property type="entry name" value="Prot_kinase_dom"/>
</dbReference>
<dbReference type="InterPro" id="IPR017441">
    <property type="entry name" value="Protein_kinase_ATP_BS"/>
</dbReference>
<dbReference type="InterPro" id="IPR008271">
    <property type="entry name" value="Ser/Thr_kinase_AS"/>
</dbReference>
<dbReference type="PANTHER" id="PTHR24347">
    <property type="entry name" value="SERINE/THREONINE-PROTEIN KINASE"/>
    <property type="match status" value="1"/>
</dbReference>
<dbReference type="Pfam" id="PF00069">
    <property type="entry name" value="Pkinase"/>
    <property type="match status" value="1"/>
</dbReference>
<dbReference type="SMART" id="SM00220">
    <property type="entry name" value="S_TKc"/>
    <property type="match status" value="1"/>
</dbReference>
<dbReference type="SUPFAM" id="SSF56112">
    <property type="entry name" value="Protein kinase-like (PK-like)"/>
    <property type="match status" value="1"/>
</dbReference>
<dbReference type="PROSITE" id="PS00107">
    <property type="entry name" value="PROTEIN_KINASE_ATP"/>
    <property type="match status" value="1"/>
</dbReference>
<dbReference type="PROSITE" id="PS50011">
    <property type="entry name" value="PROTEIN_KINASE_DOM"/>
    <property type="match status" value="1"/>
</dbReference>
<dbReference type="PROSITE" id="PS00108">
    <property type="entry name" value="PROTEIN_KINASE_ST"/>
    <property type="match status" value="1"/>
</dbReference>
<protein>
    <recommendedName>
        <fullName>Calcium/calmodulin-dependent protein kinase type 1B</fullName>
        <ecNumber>2.7.11.17</ecNumber>
    </recommendedName>
    <alternativeName>
        <fullName>CaM kinase I beta</fullName>
        <shortName>CaM kinase IB</shortName>
        <shortName>CaM-KI beta</shortName>
        <shortName>CaMKI-beta</shortName>
    </alternativeName>
    <alternativeName>
        <fullName>Pregnancy up-regulated non-ubiquitously-expressed CaM kinase</fullName>
    </alternativeName>
</protein>
<evidence type="ECO:0000250" key="1"/>
<evidence type="ECO:0000255" key="2">
    <source>
        <dbReference type="PROSITE-ProRule" id="PRU00159"/>
    </source>
</evidence>
<evidence type="ECO:0000255" key="3">
    <source>
        <dbReference type="PROSITE-ProRule" id="PRU10027"/>
    </source>
</evidence>
<evidence type="ECO:0000256" key="4">
    <source>
        <dbReference type="SAM" id="MobiDB-lite"/>
    </source>
</evidence>
<evidence type="ECO:0000269" key="5">
    <source>
    </source>
</evidence>
<evidence type="ECO:0000303" key="6">
    <source>
    </source>
</evidence>
<evidence type="ECO:0000303" key="7">
    <source>
    </source>
</evidence>
<evidence type="ECO:0000303" key="8">
    <source ref="2"/>
</evidence>
<evidence type="ECO:0000305" key="9"/>